<protein>
    <recommendedName>
        <fullName evidence="1">Large ribosomal subunit protein bL12</fullName>
    </recommendedName>
    <alternativeName>
        <fullName evidence="2">50S ribosomal protein L7/L12</fullName>
    </alternativeName>
</protein>
<proteinExistence type="inferred from homology"/>
<feature type="chain" id="PRO_1000007107" description="Large ribosomal subunit protein bL12">
    <location>
        <begin position="1"/>
        <end position="133"/>
    </location>
</feature>
<keyword id="KW-0687">Ribonucleoprotein</keyword>
<keyword id="KW-0689">Ribosomal protein</keyword>
<organism>
    <name type="scientific">Trichodesmium erythraeum (strain IMS101)</name>
    <dbReference type="NCBI Taxonomy" id="203124"/>
    <lineage>
        <taxon>Bacteria</taxon>
        <taxon>Bacillati</taxon>
        <taxon>Cyanobacteriota</taxon>
        <taxon>Cyanophyceae</taxon>
        <taxon>Oscillatoriophycideae</taxon>
        <taxon>Oscillatoriales</taxon>
        <taxon>Microcoleaceae</taxon>
        <taxon>Trichodesmium</taxon>
    </lineage>
</organism>
<sequence>MSAKTDEILEQLKSLSLLEASELVKQIEDAFGVSAAAPAGGMMMPMAMPGAPGAAAAEPEEEQTEFDAILTEFPSDKKIAILKVVRSITGLGLKEAKELVESVPKPLKEGIAKEAAEDIKKQLEEAGAKVEIK</sequence>
<accession>Q119S9</accession>
<dbReference type="EMBL" id="CP000393">
    <property type="protein sequence ID" value="ABG49745.1"/>
    <property type="molecule type" value="Genomic_DNA"/>
</dbReference>
<dbReference type="RefSeq" id="WP_011610141.1">
    <property type="nucleotide sequence ID" value="NC_008312.1"/>
</dbReference>
<dbReference type="SMR" id="Q119S9"/>
<dbReference type="STRING" id="203124.Tery_0262"/>
<dbReference type="KEGG" id="ter:Tery_0262"/>
<dbReference type="eggNOG" id="COG0222">
    <property type="taxonomic scope" value="Bacteria"/>
</dbReference>
<dbReference type="HOGENOM" id="CLU_086499_3_0_3"/>
<dbReference type="OrthoDB" id="9811748at2"/>
<dbReference type="GO" id="GO:0022625">
    <property type="term" value="C:cytosolic large ribosomal subunit"/>
    <property type="evidence" value="ECO:0007669"/>
    <property type="project" value="TreeGrafter"/>
</dbReference>
<dbReference type="GO" id="GO:0003729">
    <property type="term" value="F:mRNA binding"/>
    <property type="evidence" value="ECO:0007669"/>
    <property type="project" value="TreeGrafter"/>
</dbReference>
<dbReference type="GO" id="GO:0003735">
    <property type="term" value="F:structural constituent of ribosome"/>
    <property type="evidence" value="ECO:0007669"/>
    <property type="project" value="InterPro"/>
</dbReference>
<dbReference type="GO" id="GO:0006412">
    <property type="term" value="P:translation"/>
    <property type="evidence" value="ECO:0007669"/>
    <property type="project" value="UniProtKB-UniRule"/>
</dbReference>
<dbReference type="CDD" id="cd00387">
    <property type="entry name" value="Ribosomal_L7_L12"/>
    <property type="match status" value="1"/>
</dbReference>
<dbReference type="FunFam" id="3.30.1390.10:FF:000001">
    <property type="entry name" value="50S ribosomal protein L7/L12"/>
    <property type="match status" value="1"/>
</dbReference>
<dbReference type="Gene3D" id="3.30.1390.10">
    <property type="match status" value="1"/>
</dbReference>
<dbReference type="Gene3D" id="1.20.5.710">
    <property type="entry name" value="Single helix bin"/>
    <property type="match status" value="1"/>
</dbReference>
<dbReference type="HAMAP" id="MF_00368">
    <property type="entry name" value="Ribosomal_bL12"/>
    <property type="match status" value="1"/>
</dbReference>
<dbReference type="InterPro" id="IPR000206">
    <property type="entry name" value="Ribosomal_bL12"/>
</dbReference>
<dbReference type="InterPro" id="IPR013823">
    <property type="entry name" value="Ribosomal_bL12_C"/>
</dbReference>
<dbReference type="InterPro" id="IPR014719">
    <property type="entry name" value="Ribosomal_bL12_C/ClpS-like"/>
</dbReference>
<dbReference type="InterPro" id="IPR008932">
    <property type="entry name" value="Ribosomal_bL12_oligo"/>
</dbReference>
<dbReference type="InterPro" id="IPR036235">
    <property type="entry name" value="Ribosomal_bL12_oligo_N_sf"/>
</dbReference>
<dbReference type="NCBIfam" id="TIGR00855">
    <property type="entry name" value="L12"/>
    <property type="match status" value="1"/>
</dbReference>
<dbReference type="PANTHER" id="PTHR45987">
    <property type="entry name" value="39S RIBOSOMAL PROTEIN L12"/>
    <property type="match status" value="1"/>
</dbReference>
<dbReference type="PANTHER" id="PTHR45987:SF4">
    <property type="entry name" value="LARGE RIBOSOMAL SUBUNIT PROTEIN BL12M"/>
    <property type="match status" value="1"/>
</dbReference>
<dbReference type="Pfam" id="PF00542">
    <property type="entry name" value="Ribosomal_L12"/>
    <property type="match status" value="1"/>
</dbReference>
<dbReference type="Pfam" id="PF16320">
    <property type="entry name" value="Ribosomal_L12_N"/>
    <property type="match status" value="1"/>
</dbReference>
<dbReference type="SUPFAM" id="SSF54736">
    <property type="entry name" value="ClpS-like"/>
    <property type="match status" value="1"/>
</dbReference>
<dbReference type="SUPFAM" id="SSF48300">
    <property type="entry name" value="Ribosomal protein L7/12, oligomerisation (N-terminal) domain"/>
    <property type="match status" value="1"/>
</dbReference>
<comment type="function">
    <text evidence="1">Forms part of the ribosomal stalk which helps the ribosome interact with GTP-bound translation factors. Is thus essential for accurate translation.</text>
</comment>
<comment type="subunit">
    <text evidence="1">Homodimer. Part of the ribosomal stalk of the 50S ribosomal subunit. Forms a multimeric L10(L12)X complex, where L10 forms an elongated spine to which 2 to 4 L12 dimers bind in a sequential fashion. Binds GTP-bound translation factors.</text>
</comment>
<comment type="similarity">
    <text evidence="1">Belongs to the bacterial ribosomal protein bL12 family.</text>
</comment>
<name>RL7_TRIEI</name>
<gene>
    <name evidence="1" type="primary">rplL</name>
    <name evidence="1" type="synonym">rpl12</name>
    <name type="ordered locus">Tery_0262</name>
</gene>
<reference key="1">
    <citation type="journal article" date="2015" name="Proc. Natl. Acad. Sci. U.S.A.">
        <title>Trichodesmium genome maintains abundant, widespread noncoding DNA in situ, despite oligotrophic lifestyle.</title>
        <authorList>
            <person name="Walworth N."/>
            <person name="Pfreundt U."/>
            <person name="Nelson W.C."/>
            <person name="Mincer T."/>
            <person name="Heidelberg J.F."/>
            <person name="Fu F."/>
            <person name="Waterbury J.B."/>
            <person name="Glavina del Rio T."/>
            <person name="Goodwin L."/>
            <person name="Kyrpides N.C."/>
            <person name="Land M.L."/>
            <person name="Woyke T."/>
            <person name="Hutchins D.A."/>
            <person name="Hess W.R."/>
            <person name="Webb E.A."/>
        </authorList>
    </citation>
    <scope>NUCLEOTIDE SEQUENCE [LARGE SCALE GENOMIC DNA]</scope>
    <source>
        <strain>IMS101</strain>
    </source>
</reference>
<evidence type="ECO:0000255" key="1">
    <source>
        <dbReference type="HAMAP-Rule" id="MF_00368"/>
    </source>
</evidence>
<evidence type="ECO:0000305" key="2"/>